<name>Y1379_LYSSC</name>
<comment type="similarity">
    <text evidence="1">Belongs to the UPF0637 family.</text>
</comment>
<comment type="sequence caution" evidence="2">
    <conflict type="erroneous initiation">
        <sequence resource="EMBL-CDS" id="ACA38987"/>
    </conflict>
</comment>
<feature type="chain" id="PRO_0000348317" description="UPF0637 protein Bsph_1379">
    <location>
        <begin position="1"/>
        <end position="211"/>
    </location>
</feature>
<sequence length="211" mass="24469">MPKIKWTNKDFNVFKIDGLEQRMNALNDHVRPKFHQLGDDFATYFSSKLGEEFFPHVAKHARRTVNPPQDSWVAFAPYKRGYKSLPHFQIGLWHSHLFIVLAIIYEAPQKNVMAERLLAHPSLFEQLSDDFIVSGDHMSPEAISLEEAKEDKLKELLLRLRDVKKGEFLIGRHIPKDQATKLTASEFHQLTEQTFNSLLPFYNVIVGKDLK</sequence>
<accession>B1HPT5</accession>
<organism>
    <name type="scientific">Lysinibacillus sphaericus (strain C3-41)</name>
    <dbReference type="NCBI Taxonomy" id="444177"/>
    <lineage>
        <taxon>Bacteria</taxon>
        <taxon>Bacillati</taxon>
        <taxon>Bacillota</taxon>
        <taxon>Bacilli</taxon>
        <taxon>Bacillales</taxon>
        <taxon>Bacillaceae</taxon>
        <taxon>Lysinibacillus</taxon>
    </lineage>
</organism>
<proteinExistence type="inferred from homology"/>
<reference key="1">
    <citation type="journal article" date="2008" name="J. Bacteriol.">
        <title>Complete genome sequence of the mosquitocidal bacterium Bacillus sphaericus C3-41 and comparison with those of closely related Bacillus species.</title>
        <authorList>
            <person name="Hu X."/>
            <person name="Fan W."/>
            <person name="Han B."/>
            <person name="Liu H."/>
            <person name="Zheng D."/>
            <person name="Li Q."/>
            <person name="Dong W."/>
            <person name="Yan J."/>
            <person name="Gao M."/>
            <person name="Berry C."/>
            <person name="Yuan Z."/>
        </authorList>
    </citation>
    <scope>NUCLEOTIDE SEQUENCE [LARGE SCALE GENOMIC DNA]</scope>
    <source>
        <strain>C3-41</strain>
    </source>
</reference>
<protein>
    <recommendedName>
        <fullName evidence="1">UPF0637 protein Bsph_1379</fullName>
    </recommendedName>
</protein>
<dbReference type="EMBL" id="CP000817">
    <property type="protein sequence ID" value="ACA38987.1"/>
    <property type="status" value="ALT_INIT"/>
    <property type="molecule type" value="Genomic_DNA"/>
</dbReference>
<dbReference type="RefSeq" id="WP_036160922.1">
    <property type="nucleotide sequence ID" value="NC_010382.1"/>
</dbReference>
<dbReference type="SMR" id="B1HPT5"/>
<dbReference type="EnsemblBacteria" id="ACA38987">
    <property type="protein sequence ID" value="ACA38987"/>
    <property type="gene ID" value="Bsph_1379"/>
</dbReference>
<dbReference type="KEGG" id="lsp:Bsph_1379"/>
<dbReference type="HOGENOM" id="CLU_096059_0_0_9"/>
<dbReference type="Proteomes" id="UP000002164">
    <property type="component" value="Chromosome"/>
</dbReference>
<dbReference type="Gene3D" id="3.30.930.20">
    <property type="entry name" value="Protein of unknown function DUF1054"/>
    <property type="match status" value="1"/>
</dbReference>
<dbReference type="HAMAP" id="MF_01851">
    <property type="entry name" value="UPF0637"/>
    <property type="match status" value="1"/>
</dbReference>
<dbReference type="InterPro" id="IPR009403">
    <property type="entry name" value="UPF0637"/>
</dbReference>
<dbReference type="InterPro" id="IPR053707">
    <property type="entry name" value="UPF0637_domain_sf"/>
</dbReference>
<dbReference type="Pfam" id="PF06335">
    <property type="entry name" value="DUF1054"/>
    <property type="match status" value="1"/>
</dbReference>
<dbReference type="PIRSF" id="PIRSF021332">
    <property type="entry name" value="DUF1054"/>
    <property type="match status" value="1"/>
</dbReference>
<dbReference type="SUPFAM" id="SSF142913">
    <property type="entry name" value="YktB/PF0168-like"/>
    <property type="match status" value="1"/>
</dbReference>
<evidence type="ECO:0000255" key="1">
    <source>
        <dbReference type="HAMAP-Rule" id="MF_01851"/>
    </source>
</evidence>
<evidence type="ECO:0000305" key="2"/>
<gene>
    <name type="ordered locus">Bsph_1379</name>
</gene>